<reference key="1">
    <citation type="journal article" date="1987" name="FEBS Lett.">
        <title>Splicing of group II introns in mRNAs coding for cytochrome b6 and subunit IV in the liverwort Marchantia polymorpha chloroplast genome. Exon specifying a region coding for two genes with the spacer region.</title>
        <authorList>
            <person name="Fukuzawa H."/>
            <person name="Yoshida T."/>
            <person name="Kohchi T."/>
            <person name="Okumura T."/>
            <person name="Sawano Y."/>
            <person name="Ohyama K."/>
        </authorList>
    </citation>
    <scope>NUCLEOTIDE SEQUENCE [GENOMIC DNA]</scope>
</reference>
<reference key="2">
    <citation type="journal article" date="1988" name="J. Mol. Biol.">
        <title>Structure and organization of Marchantia polymorpha chloroplast genome. III. Gene organization of the large single copy region from rbcL to trnI(CAU).</title>
        <authorList>
            <person name="Fukuzawa H."/>
            <person name="Kohchi T."/>
            <person name="Sano T."/>
            <person name="Shirai H."/>
            <person name="Umesono K."/>
            <person name="Inokuchi H."/>
            <person name="Ozeki H."/>
            <person name="Ohyama K."/>
        </authorList>
    </citation>
    <scope>NUCLEOTIDE SEQUENCE [GENOMIC DNA]</scope>
</reference>
<reference key="3">
    <citation type="journal article" date="1986" name="Nature">
        <title>Chloroplast gene organization deduced from complete sequence of liverwort Marchantia polymorpha chloroplast DNA.</title>
        <authorList>
            <person name="Ohyama K."/>
            <person name="Fukuzawa H."/>
            <person name="Kohchi T."/>
            <person name="Shirai H."/>
            <person name="Sano T."/>
            <person name="Sano S."/>
            <person name="Umesono K."/>
            <person name="Shiki Y."/>
            <person name="Takeuchi M."/>
            <person name="Chang Z."/>
            <person name="Aota S."/>
            <person name="Inokuchi H."/>
            <person name="Ozeki H."/>
        </authorList>
    </citation>
    <scope>NUCLEOTIDE SEQUENCE [LARGE SCALE GENOMIC DNA]</scope>
</reference>
<organism>
    <name type="scientific">Marchantia polymorpha</name>
    <name type="common">Common liverwort</name>
    <name type="synonym">Marchantia aquatica</name>
    <dbReference type="NCBI Taxonomy" id="3197"/>
    <lineage>
        <taxon>Eukaryota</taxon>
        <taxon>Viridiplantae</taxon>
        <taxon>Streptophyta</taxon>
        <taxon>Embryophyta</taxon>
        <taxon>Marchantiophyta</taxon>
        <taxon>Marchantiopsida</taxon>
        <taxon>Marchantiidae</taxon>
        <taxon>Marchantiales</taxon>
        <taxon>Marchantiaceae</taxon>
        <taxon>Marchantia</taxon>
    </lineage>
</organism>
<evidence type="ECO:0000250" key="1"/>
<evidence type="ECO:0000255" key="2">
    <source>
        <dbReference type="HAMAP-Rule" id="MF_01344"/>
    </source>
</evidence>
<accession>P06250</accession>
<protein>
    <recommendedName>
        <fullName evidence="2">Cytochrome b6-f complex subunit 4</fullName>
    </recommendedName>
    <alternativeName>
        <fullName evidence="2">17 kDa polypeptide</fullName>
    </alternativeName>
</protein>
<gene>
    <name evidence="2" type="primary">petD</name>
</gene>
<dbReference type="EMBL" id="X04465">
    <property type="protein sequence ID" value="CAA28116.1"/>
    <property type="molecule type" value="Genomic_DNA"/>
</dbReference>
<dbReference type="PIR" id="A00166">
    <property type="entry name" value="WMLV17"/>
</dbReference>
<dbReference type="RefSeq" id="NP_039330.1">
    <property type="nucleotide sequence ID" value="NC_001319.1"/>
</dbReference>
<dbReference type="RefSeq" id="YP_009646843.1">
    <property type="nucleotide sequence ID" value="NC_042505.1"/>
</dbReference>
<dbReference type="SMR" id="P06250"/>
<dbReference type="GeneID" id="2702563"/>
<dbReference type="GeneID" id="40386693"/>
<dbReference type="GO" id="GO:0009535">
    <property type="term" value="C:chloroplast thylakoid membrane"/>
    <property type="evidence" value="ECO:0007669"/>
    <property type="project" value="UniProtKB-SubCell"/>
</dbReference>
<dbReference type="GO" id="GO:0045158">
    <property type="term" value="F:electron transporter, transferring electrons within cytochrome b6/f complex of photosystem II activity"/>
    <property type="evidence" value="ECO:0007669"/>
    <property type="project" value="UniProtKB-UniRule"/>
</dbReference>
<dbReference type="GO" id="GO:0045156">
    <property type="term" value="F:electron transporter, transferring electrons within the cyclic electron transport pathway of photosynthesis activity"/>
    <property type="evidence" value="ECO:0007669"/>
    <property type="project" value="InterPro"/>
</dbReference>
<dbReference type="GO" id="GO:0016491">
    <property type="term" value="F:oxidoreductase activity"/>
    <property type="evidence" value="ECO:0007669"/>
    <property type="project" value="InterPro"/>
</dbReference>
<dbReference type="GO" id="GO:0009767">
    <property type="term" value="P:photosynthetic electron transport chain"/>
    <property type="evidence" value="ECO:0007669"/>
    <property type="project" value="InterPro"/>
</dbReference>
<dbReference type="CDD" id="cd00290">
    <property type="entry name" value="cytochrome_b_C"/>
    <property type="match status" value="1"/>
</dbReference>
<dbReference type="FunFam" id="1.10.287.980:FF:000001">
    <property type="entry name" value="Cytochrome b6-f complex subunit 4"/>
    <property type="match status" value="1"/>
</dbReference>
<dbReference type="FunFam" id="1.20.5.510:FF:000002">
    <property type="entry name" value="Cytochrome b6-f complex subunit 4"/>
    <property type="match status" value="1"/>
</dbReference>
<dbReference type="Gene3D" id="1.10.287.980">
    <property type="entry name" value="plastocyanin oxidoreductase"/>
    <property type="match status" value="1"/>
</dbReference>
<dbReference type="Gene3D" id="1.20.5.510">
    <property type="entry name" value="Single helix bin"/>
    <property type="match status" value="1"/>
</dbReference>
<dbReference type="HAMAP" id="MF_01344">
    <property type="entry name" value="Cytb6_f_subIV"/>
    <property type="match status" value="1"/>
</dbReference>
<dbReference type="InterPro" id="IPR005798">
    <property type="entry name" value="Cyt_b/b6_C"/>
</dbReference>
<dbReference type="InterPro" id="IPR036150">
    <property type="entry name" value="Cyt_b/b6_C_sf"/>
</dbReference>
<dbReference type="InterPro" id="IPR005870">
    <property type="entry name" value="Cyt_b6/f_cplx_suIV"/>
</dbReference>
<dbReference type="InterPro" id="IPR048260">
    <property type="entry name" value="Cytochrome_b_C_euk/bac"/>
</dbReference>
<dbReference type="NCBIfam" id="TIGR01156">
    <property type="entry name" value="cytb6_f_IV"/>
    <property type="match status" value="1"/>
</dbReference>
<dbReference type="PANTHER" id="PTHR19271">
    <property type="entry name" value="CYTOCHROME B"/>
    <property type="match status" value="1"/>
</dbReference>
<dbReference type="PANTHER" id="PTHR19271:SF40">
    <property type="entry name" value="CYTOCHROME B"/>
    <property type="match status" value="1"/>
</dbReference>
<dbReference type="Pfam" id="PF00032">
    <property type="entry name" value="Cytochrom_B_C"/>
    <property type="match status" value="1"/>
</dbReference>
<dbReference type="PIRSF" id="PIRSF000033">
    <property type="entry name" value="B6f_17K"/>
    <property type="match status" value="1"/>
</dbReference>
<dbReference type="SUPFAM" id="SSF81648">
    <property type="entry name" value="a domain/subunit of cytochrome bc1 complex (Ubiquinol-cytochrome c reductase)"/>
    <property type="match status" value="1"/>
</dbReference>
<dbReference type="PROSITE" id="PS51003">
    <property type="entry name" value="CYTB_CTER"/>
    <property type="match status" value="1"/>
</dbReference>
<comment type="function">
    <text evidence="2">Component of the cytochrome b6-f complex, which mediates electron transfer between photosystem II (PSII) and photosystem I (PSI), cyclic electron flow around PSI, and state transitions.</text>
</comment>
<comment type="subunit">
    <text evidence="1">The 4 large subunits of the cytochrome b6-f complex are cytochrome b6, subunit IV (17 kDa polypeptide, petD), cytochrome f and the Rieske protein, while the 4 small subunits are petG, petL, petM and petN. The complex functions as a dimer (By similarity).</text>
</comment>
<comment type="subcellular location">
    <subcellularLocation>
        <location evidence="2">Plastid</location>
        <location evidence="2">Chloroplast thylakoid membrane</location>
        <topology evidence="2">Multi-pass membrane protein</topology>
    </subcellularLocation>
</comment>
<comment type="similarity">
    <text evidence="2">Belongs to the cytochrome b family. PetD subfamily.</text>
</comment>
<keyword id="KW-0150">Chloroplast</keyword>
<keyword id="KW-0249">Electron transport</keyword>
<keyword id="KW-0472">Membrane</keyword>
<keyword id="KW-0602">Photosynthesis</keyword>
<keyword id="KW-0934">Plastid</keyword>
<keyword id="KW-0793">Thylakoid</keyword>
<keyword id="KW-0812">Transmembrane</keyword>
<keyword id="KW-1133">Transmembrane helix</keyword>
<keyword id="KW-0813">Transport</keyword>
<geneLocation type="chloroplast"/>
<name>PETD_MARPO</name>
<proteinExistence type="inferred from homology"/>
<feature type="chain" id="PRO_0000061868" description="Cytochrome b6-f complex subunit 4">
    <location>
        <begin position="1"/>
        <end position="160"/>
    </location>
</feature>
<feature type="transmembrane region" description="Helical" evidence="2">
    <location>
        <begin position="36"/>
        <end position="56"/>
    </location>
</feature>
<feature type="transmembrane region" description="Helical" evidence="2">
    <location>
        <begin position="95"/>
        <end position="115"/>
    </location>
</feature>
<feature type="transmembrane region" description="Helical" evidence="2">
    <location>
        <begin position="131"/>
        <end position="151"/>
    </location>
</feature>
<sequence length="160" mass="17386">MGVTKKPDLSDPILRAKLAKGMGHNYYGEPAWPNDLLYIFPVVILGTIACTVGLAVLEPSMIGEPANPFATPLEILPEWYFFPVFQILRTVPNKLLGVLLMAAVPAGLLTVPFLENVNKFQNPFRRPVATTVFLIGTVVALWLGIGAALPIDKSLTLGLF</sequence>